<comment type="catalytic activity">
    <reaction evidence="1">
        <text>L-homoserine + ATP = O-phospho-L-homoserine + ADP + H(+)</text>
        <dbReference type="Rhea" id="RHEA:13985"/>
        <dbReference type="ChEBI" id="CHEBI:15378"/>
        <dbReference type="ChEBI" id="CHEBI:30616"/>
        <dbReference type="ChEBI" id="CHEBI:57476"/>
        <dbReference type="ChEBI" id="CHEBI:57590"/>
        <dbReference type="ChEBI" id="CHEBI:456216"/>
        <dbReference type="EC" id="2.7.1.39"/>
    </reaction>
</comment>
<comment type="pathway">
    <text evidence="1">Amino-acid biosynthesis; L-threonine biosynthesis; L-threonine from L-aspartate: step 4/5.</text>
</comment>
<comment type="similarity">
    <text evidence="1">Belongs to the pseudomonas-type ThrB family.</text>
</comment>
<sequence>MAVYTDINEIELGAFLQQYDIGTLTSYKGIAEGVENSNYLLHTTSGSFILTLYEKRTNREDLPFFLGLMQHLASRGLECPQPVVRRDGTTIGELAGRPAAIVTFLEGMWMRRPTVEHCEAVGEGLAHMHLAGADFSLRRRNGLTLADWRPLWNLSRGRADTVEPGLVREAEADLAFLEKNWPADLPQGVIHADLFPDNVFFLGDRLSGFIDFYFACTDTLAYDVAVCLNAWCFEKDFSYNRTKGAALLRGYTSVRPLSAAEADALPVLARGAAIRFMLTRLYDWLNVPEGSFVVKKDPMEYVRKIRFHRQIETAAEYGLEQQGAAA</sequence>
<accession>A6WWG7</accession>
<feature type="chain" id="PRO_1000022587" description="Homoserine kinase">
    <location>
        <begin position="1"/>
        <end position="326"/>
    </location>
</feature>
<reference key="1">
    <citation type="journal article" date="2011" name="J. Bacteriol.">
        <title>Genome of Ochrobactrum anthropi ATCC 49188 T, a versatile opportunistic pathogen and symbiont of several eukaryotic hosts.</title>
        <authorList>
            <person name="Chain P.S."/>
            <person name="Lang D.M."/>
            <person name="Comerci D.J."/>
            <person name="Malfatti S.A."/>
            <person name="Vergez L.M."/>
            <person name="Shin M."/>
            <person name="Ugalde R.A."/>
            <person name="Garcia E."/>
            <person name="Tolmasky M.E."/>
        </authorList>
    </citation>
    <scope>NUCLEOTIDE SEQUENCE [LARGE SCALE GENOMIC DNA]</scope>
    <source>
        <strain>ATCC 49188 / DSM 6882 / CCUG 24695 / JCM 21032 / LMG 3331 / NBRC 15819 / NCTC 12168 / Alc 37</strain>
    </source>
</reference>
<name>KHSE_BRUA4</name>
<organism>
    <name type="scientific">Brucella anthropi (strain ATCC 49188 / DSM 6882 / CCUG 24695 / JCM 21032 / LMG 3331 / NBRC 15819 / NCTC 12168 / Alc 37)</name>
    <name type="common">Ochrobactrum anthropi</name>
    <dbReference type="NCBI Taxonomy" id="439375"/>
    <lineage>
        <taxon>Bacteria</taxon>
        <taxon>Pseudomonadati</taxon>
        <taxon>Pseudomonadota</taxon>
        <taxon>Alphaproteobacteria</taxon>
        <taxon>Hyphomicrobiales</taxon>
        <taxon>Brucellaceae</taxon>
        <taxon>Brucella/Ochrobactrum group</taxon>
        <taxon>Brucella</taxon>
    </lineage>
</organism>
<protein>
    <recommendedName>
        <fullName evidence="1">Homoserine kinase</fullName>
        <shortName evidence="1">HK</shortName>
        <shortName evidence="1">HSK</shortName>
        <ecNumber evidence="1">2.7.1.39</ecNumber>
    </recommendedName>
</protein>
<gene>
    <name evidence="1" type="primary">thrB</name>
    <name type="ordered locus">Oant_0590</name>
</gene>
<dbReference type="EC" id="2.7.1.39" evidence="1"/>
<dbReference type="EMBL" id="CP000758">
    <property type="protein sequence ID" value="ABS13321.1"/>
    <property type="molecule type" value="Genomic_DNA"/>
</dbReference>
<dbReference type="RefSeq" id="WP_012090853.1">
    <property type="nucleotide sequence ID" value="NC_009667.1"/>
</dbReference>
<dbReference type="SMR" id="A6WWG7"/>
<dbReference type="STRING" id="439375.Oant_0590"/>
<dbReference type="KEGG" id="oan:Oant_0590"/>
<dbReference type="PATRIC" id="fig|439375.7.peg.630"/>
<dbReference type="eggNOG" id="COG2334">
    <property type="taxonomic scope" value="Bacteria"/>
</dbReference>
<dbReference type="HOGENOM" id="CLU_053300_1_0_5"/>
<dbReference type="PhylomeDB" id="A6WWG7"/>
<dbReference type="UniPathway" id="UPA00050">
    <property type="reaction ID" value="UER00064"/>
</dbReference>
<dbReference type="Proteomes" id="UP000002301">
    <property type="component" value="Chromosome 1"/>
</dbReference>
<dbReference type="GO" id="GO:0005524">
    <property type="term" value="F:ATP binding"/>
    <property type="evidence" value="ECO:0007669"/>
    <property type="project" value="UniProtKB-KW"/>
</dbReference>
<dbReference type="GO" id="GO:0004413">
    <property type="term" value="F:homoserine kinase activity"/>
    <property type="evidence" value="ECO:0007669"/>
    <property type="project" value="UniProtKB-UniRule"/>
</dbReference>
<dbReference type="GO" id="GO:0009088">
    <property type="term" value="P:threonine biosynthetic process"/>
    <property type="evidence" value="ECO:0007669"/>
    <property type="project" value="UniProtKB-UniRule"/>
</dbReference>
<dbReference type="CDD" id="cd05153">
    <property type="entry name" value="HomoserineK_II"/>
    <property type="match status" value="1"/>
</dbReference>
<dbReference type="Gene3D" id="3.90.1200.10">
    <property type="match status" value="1"/>
</dbReference>
<dbReference type="Gene3D" id="3.30.200.20">
    <property type="entry name" value="Phosphorylase Kinase, domain 1"/>
    <property type="match status" value="1"/>
</dbReference>
<dbReference type="HAMAP" id="MF_00301">
    <property type="entry name" value="Homoser_kinase_2"/>
    <property type="match status" value="1"/>
</dbReference>
<dbReference type="InterPro" id="IPR002575">
    <property type="entry name" value="Aminoglycoside_PTrfase"/>
</dbReference>
<dbReference type="InterPro" id="IPR005280">
    <property type="entry name" value="Homoserine_kinase_II"/>
</dbReference>
<dbReference type="InterPro" id="IPR011009">
    <property type="entry name" value="Kinase-like_dom_sf"/>
</dbReference>
<dbReference type="InterPro" id="IPR050249">
    <property type="entry name" value="Pseudomonas-type_ThrB"/>
</dbReference>
<dbReference type="NCBIfam" id="NF003558">
    <property type="entry name" value="PRK05231.1"/>
    <property type="match status" value="1"/>
</dbReference>
<dbReference type="NCBIfam" id="TIGR00938">
    <property type="entry name" value="thrB_alt"/>
    <property type="match status" value="1"/>
</dbReference>
<dbReference type="PANTHER" id="PTHR21064:SF6">
    <property type="entry name" value="AMINOGLYCOSIDE PHOSPHOTRANSFERASE DOMAIN-CONTAINING PROTEIN"/>
    <property type="match status" value="1"/>
</dbReference>
<dbReference type="PANTHER" id="PTHR21064">
    <property type="entry name" value="AMINOGLYCOSIDE PHOSPHOTRANSFERASE DOMAIN-CONTAINING PROTEIN-RELATED"/>
    <property type="match status" value="1"/>
</dbReference>
<dbReference type="Pfam" id="PF01636">
    <property type="entry name" value="APH"/>
    <property type="match status" value="1"/>
</dbReference>
<dbReference type="SUPFAM" id="SSF56112">
    <property type="entry name" value="Protein kinase-like (PK-like)"/>
    <property type="match status" value="1"/>
</dbReference>
<keyword id="KW-0028">Amino-acid biosynthesis</keyword>
<keyword id="KW-0067">ATP-binding</keyword>
<keyword id="KW-0418">Kinase</keyword>
<keyword id="KW-0547">Nucleotide-binding</keyword>
<keyword id="KW-1185">Reference proteome</keyword>
<keyword id="KW-0791">Threonine biosynthesis</keyword>
<keyword id="KW-0808">Transferase</keyword>
<evidence type="ECO:0000255" key="1">
    <source>
        <dbReference type="HAMAP-Rule" id="MF_00301"/>
    </source>
</evidence>
<proteinExistence type="inferred from homology"/>